<sequence length="244" mass="26518">MINPFSSFRWRHSSRSPAGIPEVEPQPPDASDPFASQREQMVKKQLIKRGIRDPRVLEAMGKVPRHLFVPSDLRDRAYRDCPLPIGYGQTISQPYIVAFMTEAARLTPESVVLEIGTGSGYQAAVLAELARQVYSLERLSPLAAQAQQTLAALGYRNVEVRQGDGYQGWPEHAPYDAILVTAAPPTVPMVLLDQLAVGGTLVVPVGESPSDSGAQGSQSLLILCKTAQGWVQKGAFPVQFVPMV</sequence>
<name>PIMT_SYNJB</name>
<accession>Q2JJN4</accession>
<comment type="function">
    <text evidence="1">Catalyzes the methyl esterification of L-isoaspartyl residues in peptides and proteins that result from spontaneous decomposition of normal L-aspartyl and L-asparaginyl residues. It plays a role in the repair and/or degradation of damaged proteins.</text>
</comment>
<comment type="catalytic activity">
    <reaction evidence="1">
        <text>[protein]-L-isoaspartate + S-adenosyl-L-methionine = [protein]-L-isoaspartate alpha-methyl ester + S-adenosyl-L-homocysteine</text>
        <dbReference type="Rhea" id="RHEA:12705"/>
        <dbReference type="Rhea" id="RHEA-COMP:12143"/>
        <dbReference type="Rhea" id="RHEA-COMP:12144"/>
        <dbReference type="ChEBI" id="CHEBI:57856"/>
        <dbReference type="ChEBI" id="CHEBI:59789"/>
        <dbReference type="ChEBI" id="CHEBI:90596"/>
        <dbReference type="ChEBI" id="CHEBI:90598"/>
        <dbReference type="EC" id="2.1.1.77"/>
    </reaction>
</comment>
<comment type="subcellular location">
    <subcellularLocation>
        <location evidence="1">Cytoplasm</location>
    </subcellularLocation>
</comment>
<comment type="similarity">
    <text evidence="1">Belongs to the methyltransferase superfamily. L-isoaspartyl/D-aspartyl protein methyltransferase family.</text>
</comment>
<evidence type="ECO:0000255" key="1">
    <source>
        <dbReference type="HAMAP-Rule" id="MF_00090"/>
    </source>
</evidence>
<evidence type="ECO:0000256" key="2">
    <source>
        <dbReference type="SAM" id="MobiDB-lite"/>
    </source>
</evidence>
<dbReference type="EC" id="2.1.1.77" evidence="1"/>
<dbReference type="EMBL" id="CP000240">
    <property type="protein sequence ID" value="ABD03128.1"/>
    <property type="molecule type" value="Genomic_DNA"/>
</dbReference>
<dbReference type="RefSeq" id="WP_011433763.1">
    <property type="nucleotide sequence ID" value="NC_007776.1"/>
</dbReference>
<dbReference type="SMR" id="Q2JJN4"/>
<dbReference type="STRING" id="321332.CYB_2184"/>
<dbReference type="KEGG" id="cyb:CYB_2184"/>
<dbReference type="eggNOG" id="COG2518">
    <property type="taxonomic scope" value="Bacteria"/>
</dbReference>
<dbReference type="HOGENOM" id="CLU_055432_2_0_3"/>
<dbReference type="OrthoDB" id="9772751at2"/>
<dbReference type="Proteomes" id="UP000001938">
    <property type="component" value="Chromosome"/>
</dbReference>
<dbReference type="GO" id="GO:0005737">
    <property type="term" value="C:cytoplasm"/>
    <property type="evidence" value="ECO:0007669"/>
    <property type="project" value="UniProtKB-SubCell"/>
</dbReference>
<dbReference type="GO" id="GO:0004719">
    <property type="term" value="F:protein-L-isoaspartate (D-aspartate) O-methyltransferase activity"/>
    <property type="evidence" value="ECO:0007669"/>
    <property type="project" value="UniProtKB-UniRule"/>
</dbReference>
<dbReference type="GO" id="GO:0032259">
    <property type="term" value="P:methylation"/>
    <property type="evidence" value="ECO:0007669"/>
    <property type="project" value="UniProtKB-KW"/>
</dbReference>
<dbReference type="GO" id="GO:0036211">
    <property type="term" value="P:protein modification process"/>
    <property type="evidence" value="ECO:0007669"/>
    <property type="project" value="UniProtKB-UniRule"/>
</dbReference>
<dbReference type="GO" id="GO:0030091">
    <property type="term" value="P:protein repair"/>
    <property type="evidence" value="ECO:0007669"/>
    <property type="project" value="UniProtKB-UniRule"/>
</dbReference>
<dbReference type="CDD" id="cd02440">
    <property type="entry name" value="AdoMet_MTases"/>
    <property type="match status" value="1"/>
</dbReference>
<dbReference type="FunFam" id="3.40.50.150:FF:000010">
    <property type="entry name" value="Protein-L-isoaspartate O-methyltransferase"/>
    <property type="match status" value="1"/>
</dbReference>
<dbReference type="Gene3D" id="3.40.50.150">
    <property type="entry name" value="Vaccinia Virus protein VP39"/>
    <property type="match status" value="1"/>
</dbReference>
<dbReference type="HAMAP" id="MF_00090">
    <property type="entry name" value="PIMT"/>
    <property type="match status" value="1"/>
</dbReference>
<dbReference type="InterPro" id="IPR000682">
    <property type="entry name" value="PCMT"/>
</dbReference>
<dbReference type="InterPro" id="IPR029063">
    <property type="entry name" value="SAM-dependent_MTases_sf"/>
</dbReference>
<dbReference type="NCBIfam" id="TIGR00080">
    <property type="entry name" value="pimt"/>
    <property type="match status" value="1"/>
</dbReference>
<dbReference type="NCBIfam" id="NF001453">
    <property type="entry name" value="PRK00312.1"/>
    <property type="match status" value="1"/>
</dbReference>
<dbReference type="PANTHER" id="PTHR11579">
    <property type="entry name" value="PROTEIN-L-ISOASPARTATE O-METHYLTRANSFERASE"/>
    <property type="match status" value="1"/>
</dbReference>
<dbReference type="PANTHER" id="PTHR11579:SF0">
    <property type="entry name" value="PROTEIN-L-ISOASPARTATE(D-ASPARTATE) O-METHYLTRANSFERASE"/>
    <property type="match status" value="1"/>
</dbReference>
<dbReference type="Pfam" id="PF01135">
    <property type="entry name" value="PCMT"/>
    <property type="match status" value="1"/>
</dbReference>
<dbReference type="SUPFAM" id="SSF53335">
    <property type="entry name" value="S-adenosyl-L-methionine-dependent methyltransferases"/>
    <property type="match status" value="1"/>
</dbReference>
<dbReference type="PROSITE" id="PS01279">
    <property type="entry name" value="PCMT"/>
    <property type="match status" value="1"/>
</dbReference>
<proteinExistence type="inferred from homology"/>
<feature type="chain" id="PRO_0000351943" description="Protein-L-isoaspartate O-methyltransferase">
    <location>
        <begin position="1"/>
        <end position="244"/>
    </location>
</feature>
<feature type="region of interest" description="Disordered" evidence="2">
    <location>
        <begin position="1"/>
        <end position="39"/>
    </location>
</feature>
<feature type="active site" evidence="1">
    <location>
        <position position="92"/>
    </location>
</feature>
<keyword id="KW-0963">Cytoplasm</keyword>
<keyword id="KW-0489">Methyltransferase</keyword>
<keyword id="KW-1185">Reference proteome</keyword>
<keyword id="KW-0949">S-adenosyl-L-methionine</keyword>
<keyword id="KW-0808">Transferase</keyword>
<gene>
    <name evidence="1" type="primary">pcm</name>
    <name type="ordered locus">CYB_2184</name>
</gene>
<organism>
    <name type="scientific">Synechococcus sp. (strain JA-2-3B'a(2-13))</name>
    <name type="common">Cyanobacteria bacterium Yellowstone B-Prime</name>
    <dbReference type="NCBI Taxonomy" id="321332"/>
    <lineage>
        <taxon>Bacteria</taxon>
        <taxon>Bacillati</taxon>
        <taxon>Cyanobacteriota</taxon>
        <taxon>Cyanophyceae</taxon>
        <taxon>Synechococcales</taxon>
        <taxon>Synechococcaceae</taxon>
        <taxon>Synechococcus</taxon>
    </lineage>
</organism>
<reference key="1">
    <citation type="journal article" date="2007" name="ISME J.">
        <title>Population level functional diversity in a microbial community revealed by comparative genomic and metagenomic analyses.</title>
        <authorList>
            <person name="Bhaya D."/>
            <person name="Grossman A.R."/>
            <person name="Steunou A.-S."/>
            <person name="Khuri N."/>
            <person name="Cohan F.M."/>
            <person name="Hamamura N."/>
            <person name="Melendrez M.C."/>
            <person name="Bateson M.M."/>
            <person name="Ward D.M."/>
            <person name="Heidelberg J.F."/>
        </authorList>
    </citation>
    <scope>NUCLEOTIDE SEQUENCE [LARGE SCALE GENOMIC DNA]</scope>
    <source>
        <strain>JA-2-3B'a(2-13)</strain>
    </source>
</reference>
<protein>
    <recommendedName>
        <fullName evidence="1">Protein-L-isoaspartate O-methyltransferase</fullName>
        <ecNumber evidence="1">2.1.1.77</ecNumber>
    </recommendedName>
    <alternativeName>
        <fullName evidence="1">L-isoaspartyl protein carboxyl methyltransferase</fullName>
    </alternativeName>
    <alternativeName>
        <fullName evidence="1">Protein L-isoaspartyl methyltransferase</fullName>
    </alternativeName>
    <alternativeName>
        <fullName evidence="1">Protein-beta-aspartate methyltransferase</fullName>
        <shortName evidence="1">PIMT</shortName>
    </alternativeName>
</protein>